<feature type="chain" id="PRO_1000187597" description="Tyrosine recombinase XerC">
    <location>
        <begin position="1"/>
        <end position="298"/>
    </location>
</feature>
<feature type="domain" description="Core-binding (CB)" evidence="3">
    <location>
        <begin position="2"/>
        <end position="88"/>
    </location>
</feature>
<feature type="domain" description="Tyr recombinase" evidence="2">
    <location>
        <begin position="109"/>
        <end position="288"/>
    </location>
</feature>
<feature type="active site" evidence="1">
    <location>
        <position position="148"/>
    </location>
</feature>
<feature type="active site" evidence="1">
    <location>
        <position position="172"/>
    </location>
</feature>
<feature type="active site" evidence="1">
    <location>
        <position position="240"/>
    </location>
</feature>
<feature type="active site" evidence="1">
    <location>
        <position position="243"/>
    </location>
</feature>
<feature type="active site" evidence="1">
    <location>
        <position position="266"/>
    </location>
</feature>
<feature type="active site" description="O-(3'-phospho-DNA)-tyrosine intermediate" evidence="1">
    <location>
        <position position="275"/>
    </location>
</feature>
<evidence type="ECO:0000255" key="1">
    <source>
        <dbReference type="HAMAP-Rule" id="MF_01808"/>
    </source>
</evidence>
<evidence type="ECO:0000255" key="2">
    <source>
        <dbReference type="PROSITE-ProRule" id="PRU01246"/>
    </source>
</evidence>
<evidence type="ECO:0000255" key="3">
    <source>
        <dbReference type="PROSITE-ProRule" id="PRU01248"/>
    </source>
</evidence>
<comment type="function">
    <text evidence="1">Site-specific tyrosine recombinase, which acts by catalyzing the cutting and rejoining of the recombining DNA molecules. Binds cooperatively to specific DNA consensus sequences that are separated from XerD binding sites by a short central region, forming the heterotetrameric XerC-XerD complex that recombines DNA substrates. The complex is essential to convert dimers of the bacterial chromosome into monomers to permit their segregation at cell division. It also contributes to the segregational stability of plasmids. In the complex XerC specifically exchanges the top DNA strands.</text>
</comment>
<comment type="activity regulation">
    <text evidence="1">FtsK may regulate the catalytic switch between XerC and XerD in the heterotetrameric complex during the two steps of the recombination process.</text>
</comment>
<comment type="subunit">
    <text evidence="1">Forms a cyclic heterotetrameric complex composed of two molecules of XerC and two molecules of XerD, in which XerC interacts with XerD via its C-terminal region, XerD interacts with XerC via its C-terminal region and so on.</text>
</comment>
<comment type="subcellular location">
    <subcellularLocation>
        <location evidence="1">Cytoplasm</location>
    </subcellularLocation>
</comment>
<comment type="similarity">
    <text evidence="1">Belongs to the 'phage' integrase family. XerC subfamily.</text>
</comment>
<accession>B1LLY2</accession>
<reference key="1">
    <citation type="journal article" date="2008" name="J. Bacteriol.">
        <title>Insights into the environmental resistance gene pool from the genome sequence of the multidrug-resistant environmental isolate Escherichia coli SMS-3-5.</title>
        <authorList>
            <person name="Fricke W.F."/>
            <person name="Wright M.S."/>
            <person name="Lindell A.H."/>
            <person name="Harkins D.M."/>
            <person name="Baker-Austin C."/>
            <person name="Ravel J."/>
            <person name="Stepanauskas R."/>
        </authorList>
    </citation>
    <scope>NUCLEOTIDE SEQUENCE [LARGE SCALE GENOMIC DNA]</scope>
    <source>
        <strain>SMS-3-5 / SECEC</strain>
    </source>
</reference>
<sequence>MTDLHTDVERYLRYLSVERQLSPITLLNYQRQLEAIINFASENGLQSWQQCDVTMVRNFAVRSRRKGLGAASLALRLSALRSFFDWLVSQNELKANPAKGVSAPKAPRHLPKNIDVDDMNRLLDIDINDPLAVRDRAMLEVMYGAGLRLSELVGLDIKHLDLESGEVWVMGKGSKERRLPIGRNAVAWIEHWLDLRDLFGSEDDALFLSKLGKRISARNVQKRFAEWGIKQGLNNHVHPHKLRHSFATHMLESSGDLRGVQELLGHANLSTTQIYTHLDFQHLASVYDAAHPRAKRGK</sequence>
<dbReference type="EMBL" id="CP000970">
    <property type="protein sequence ID" value="ACB19499.1"/>
    <property type="molecule type" value="Genomic_DNA"/>
</dbReference>
<dbReference type="RefSeq" id="WP_000130691.1">
    <property type="nucleotide sequence ID" value="NC_010498.1"/>
</dbReference>
<dbReference type="SMR" id="B1LLY2"/>
<dbReference type="GeneID" id="75059707"/>
<dbReference type="KEGG" id="ecm:EcSMS35_4177"/>
<dbReference type="HOGENOM" id="CLU_027562_9_0_6"/>
<dbReference type="Proteomes" id="UP000007011">
    <property type="component" value="Chromosome"/>
</dbReference>
<dbReference type="GO" id="GO:0005737">
    <property type="term" value="C:cytoplasm"/>
    <property type="evidence" value="ECO:0007669"/>
    <property type="project" value="UniProtKB-SubCell"/>
</dbReference>
<dbReference type="GO" id="GO:0003677">
    <property type="term" value="F:DNA binding"/>
    <property type="evidence" value="ECO:0007669"/>
    <property type="project" value="UniProtKB-KW"/>
</dbReference>
<dbReference type="GO" id="GO:0009037">
    <property type="term" value="F:tyrosine-based site-specific recombinase activity"/>
    <property type="evidence" value="ECO:0007669"/>
    <property type="project" value="UniProtKB-UniRule"/>
</dbReference>
<dbReference type="GO" id="GO:0051301">
    <property type="term" value="P:cell division"/>
    <property type="evidence" value="ECO:0007669"/>
    <property type="project" value="UniProtKB-KW"/>
</dbReference>
<dbReference type="GO" id="GO:0007059">
    <property type="term" value="P:chromosome segregation"/>
    <property type="evidence" value="ECO:0007669"/>
    <property type="project" value="UniProtKB-UniRule"/>
</dbReference>
<dbReference type="GO" id="GO:0006313">
    <property type="term" value="P:DNA transposition"/>
    <property type="evidence" value="ECO:0007669"/>
    <property type="project" value="UniProtKB-UniRule"/>
</dbReference>
<dbReference type="CDD" id="cd00798">
    <property type="entry name" value="INT_XerDC_C"/>
    <property type="match status" value="1"/>
</dbReference>
<dbReference type="FunFam" id="1.10.443.10:FF:000002">
    <property type="entry name" value="Tyrosine recombinase XerC"/>
    <property type="match status" value="1"/>
</dbReference>
<dbReference type="Gene3D" id="1.10.150.130">
    <property type="match status" value="1"/>
</dbReference>
<dbReference type="Gene3D" id="1.10.443.10">
    <property type="entry name" value="Intergrase catalytic core"/>
    <property type="match status" value="1"/>
</dbReference>
<dbReference type="HAMAP" id="MF_01808">
    <property type="entry name" value="Recomb_XerC_XerD"/>
    <property type="match status" value="1"/>
</dbReference>
<dbReference type="InterPro" id="IPR044068">
    <property type="entry name" value="CB"/>
</dbReference>
<dbReference type="InterPro" id="IPR011010">
    <property type="entry name" value="DNA_brk_join_enz"/>
</dbReference>
<dbReference type="InterPro" id="IPR013762">
    <property type="entry name" value="Integrase-like_cat_sf"/>
</dbReference>
<dbReference type="InterPro" id="IPR002104">
    <property type="entry name" value="Integrase_catalytic"/>
</dbReference>
<dbReference type="InterPro" id="IPR010998">
    <property type="entry name" value="Integrase_recombinase_N"/>
</dbReference>
<dbReference type="InterPro" id="IPR004107">
    <property type="entry name" value="Integrase_SAM-like_N"/>
</dbReference>
<dbReference type="InterPro" id="IPR011931">
    <property type="entry name" value="Recomb_XerC"/>
</dbReference>
<dbReference type="InterPro" id="IPR023009">
    <property type="entry name" value="Tyrosine_recombinase_XerC/XerD"/>
</dbReference>
<dbReference type="InterPro" id="IPR050090">
    <property type="entry name" value="Tyrosine_recombinase_XerCD"/>
</dbReference>
<dbReference type="NCBIfam" id="NF001399">
    <property type="entry name" value="PRK00283.1"/>
    <property type="match status" value="1"/>
</dbReference>
<dbReference type="NCBIfam" id="TIGR02224">
    <property type="entry name" value="recomb_XerC"/>
    <property type="match status" value="1"/>
</dbReference>
<dbReference type="PANTHER" id="PTHR30349">
    <property type="entry name" value="PHAGE INTEGRASE-RELATED"/>
    <property type="match status" value="1"/>
</dbReference>
<dbReference type="PANTHER" id="PTHR30349:SF81">
    <property type="entry name" value="TYROSINE RECOMBINASE XERC"/>
    <property type="match status" value="1"/>
</dbReference>
<dbReference type="Pfam" id="PF02899">
    <property type="entry name" value="Phage_int_SAM_1"/>
    <property type="match status" value="1"/>
</dbReference>
<dbReference type="Pfam" id="PF00589">
    <property type="entry name" value="Phage_integrase"/>
    <property type="match status" value="1"/>
</dbReference>
<dbReference type="SUPFAM" id="SSF56349">
    <property type="entry name" value="DNA breaking-rejoining enzymes"/>
    <property type="match status" value="1"/>
</dbReference>
<dbReference type="SUPFAM" id="SSF47823">
    <property type="entry name" value="lambda integrase-like, N-terminal domain"/>
    <property type="match status" value="1"/>
</dbReference>
<dbReference type="PROSITE" id="PS51900">
    <property type="entry name" value="CB"/>
    <property type="match status" value="1"/>
</dbReference>
<dbReference type="PROSITE" id="PS51898">
    <property type="entry name" value="TYR_RECOMBINASE"/>
    <property type="match status" value="1"/>
</dbReference>
<name>XERC_ECOSM</name>
<organism>
    <name type="scientific">Escherichia coli (strain SMS-3-5 / SECEC)</name>
    <dbReference type="NCBI Taxonomy" id="439855"/>
    <lineage>
        <taxon>Bacteria</taxon>
        <taxon>Pseudomonadati</taxon>
        <taxon>Pseudomonadota</taxon>
        <taxon>Gammaproteobacteria</taxon>
        <taxon>Enterobacterales</taxon>
        <taxon>Enterobacteriaceae</taxon>
        <taxon>Escherichia</taxon>
    </lineage>
</organism>
<protein>
    <recommendedName>
        <fullName evidence="1">Tyrosine recombinase XerC</fullName>
    </recommendedName>
</protein>
<keyword id="KW-0131">Cell cycle</keyword>
<keyword id="KW-0132">Cell division</keyword>
<keyword id="KW-0159">Chromosome partition</keyword>
<keyword id="KW-0963">Cytoplasm</keyword>
<keyword id="KW-0229">DNA integration</keyword>
<keyword id="KW-0233">DNA recombination</keyword>
<keyword id="KW-0238">DNA-binding</keyword>
<proteinExistence type="inferred from homology"/>
<gene>
    <name evidence="1" type="primary">xerC</name>
    <name type="ordered locus">EcSMS35_4177</name>
</gene>